<reference key="1">
    <citation type="journal article" date="1997" name="Plant Mol. Biol.">
        <title>Characterization and heterologous expression of hydroxycinnamoyl/benzoyl-CoA:anthranilate N-hydroxycinnamoyl/benzoyltransferase from elicited cell cultures of carnation, Dianthus caryophyllus L.</title>
        <authorList>
            <person name="Yang Q."/>
            <person name="Reinhard K."/>
            <person name="Schiltz E."/>
            <person name="Matern U."/>
        </authorList>
    </citation>
    <scope>NUCLEOTIDE SEQUENCE [MRNA]</scope>
    <scope>PROTEIN SEQUENCE OF 7-18; 27-45; 74-84; 197-230; 299-306; 343-350 AND 373-385</scope>
    <scope>BIOPHYSICOCHEMICAL PROPERTIES</scope>
    <scope>ENZYME ACTIVITY</scope>
    <scope>FUNCTION</scope>
</reference>
<reference key="2">
    <citation type="journal article" date="1998" name="Plant Mol. Biol.">
        <title>Anthranilate N-hydroxycinnamoyl/benzoyltransferase gene from carnation: rapid elicitation of transcription and promoter analysis.</title>
        <authorList>
            <person name="Yang Q."/>
            <person name="Grimmig B."/>
            <person name="Matern U."/>
        </authorList>
    </citation>
    <scope>INDUCTION</scope>
</reference>
<feature type="chain" id="PRO_0000147363" description="Anthranilate N-benzoyltransferase protein 1">
    <location>
        <begin position="1"/>
        <end position="445"/>
    </location>
</feature>
<feature type="active site" description="Proton acceptor" evidence="1">
    <location>
        <position position="164"/>
    </location>
</feature>
<feature type="active site" description="Proton acceptor" evidence="1">
    <location>
        <position position="392"/>
    </location>
</feature>
<evidence type="ECO:0000255" key="1"/>
<evidence type="ECO:0000269" key="2">
    <source>
    </source>
</evidence>
<evidence type="ECO:0000269" key="3">
    <source>
    </source>
</evidence>
<evidence type="ECO:0000305" key="4"/>
<gene>
    <name type="primary">HCBT1</name>
</gene>
<protein>
    <recommendedName>
        <fullName>Anthranilate N-benzoyltransferase protein 1</fullName>
        <ecNumber>2.3.1.144</ecNumber>
    </recommendedName>
    <alternativeName>
        <fullName>Anthranilate N-hydroxycinnamoyl/benzoyltransferase 1</fullName>
    </alternativeName>
</protein>
<organism>
    <name type="scientific">Dianthus caryophyllus</name>
    <name type="common">Carnation</name>
    <name type="synonym">Clove pink</name>
    <dbReference type="NCBI Taxonomy" id="3570"/>
    <lineage>
        <taxon>Eukaryota</taxon>
        <taxon>Viridiplantae</taxon>
        <taxon>Streptophyta</taxon>
        <taxon>Embryophyta</taxon>
        <taxon>Tracheophyta</taxon>
        <taxon>Spermatophyta</taxon>
        <taxon>Magnoliopsida</taxon>
        <taxon>eudicotyledons</taxon>
        <taxon>Gunneridae</taxon>
        <taxon>Pentapetalae</taxon>
        <taxon>Caryophyllales</taxon>
        <taxon>Caryophyllaceae</taxon>
        <taxon>Caryophylleae</taxon>
        <taxon>Dianthus</taxon>
    </lineage>
</organism>
<sequence length="445" mass="50038">MSIQIKQSTMVRPAEETPNKSLWLSNIDMILRTPYSHTGAVLIYKQPDNNEDNIHPSSSMYFDANILIEALSKALVPFYPMAGRLKINGDRYEIDCNAEGALFVEAESSHVLEDFGDFRPNDELHRVMVPTCDYSKGISSFPLLMVQLTRFRCGGVSIGFAQHHHVCDGMAHFEFNNSWARIAKGLLPALEPVHDRYLHLRPRNPPQIKYSHSQFEPFVPSLPNELLDGKTNKSQTLFILSREQINTLKQKLDLSNNTTRLSTYEVVAAHVWRSVSKARGLSDHEEIKLIMPVDGRSRINNPSLPKGYCGNVVFLAVCTATVGDLSCNPLTDTAGKVQEALKGLDDDYLRSAIDHTESKPGLPVPYMGSPEKTLYPNVLVNSWGRIPYQAMDFGWGSPTFFGISNIFYDGQCFLIPSRDGDGSMTLAINLFSSHLSRFKKYFYDF</sequence>
<keyword id="KW-0012">Acyltransferase</keyword>
<keyword id="KW-0903">Direct protein sequencing</keyword>
<keyword id="KW-0284">Flavonoid biosynthesis</keyword>
<keyword id="KW-0808">Transferase</keyword>
<proteinExistence type="evidence at protein level"/>
<comment type="function">
    <text evidence="2">Catalyzes the formation of N-benzoylanthranilate, in the course of methoxydianthramide B, a phytoalexin. Phytoalexins are produced in response to infection by parasites, and are essential for the expression of disease resistance.</text>
</comment>
<comment type="catalytic activity">
    <reaction evidence="2">
        <text>anthranilate + benzoyl-CoA = N-benzoylanthranilate + CoA</text>
        <dbReference type="Rhea" id="RHEA:21600"/>
        <dbReference type="ChEBI" id="CHEBI:16567"/>
        <dbReference type="ChEBI" id="CHEBI:17331"/>
        <dbReference type="ChEBI" id="CHEBI:57287"/>
        <dbReference type="ChEBI" id="CHEBI:57369"/>
        <dbReference type="EC" id="2.3.1.144"/>
    </reaction>
</comment>
<comment type="biophysicochemical properties">
    <phDependence>
        <text evidence="2">Inactive below pH 7.0.</text>
    </phDependence>
</comment>
<comment type="pathway">
    <text>Phytoalexin biosynthesis; methoxydianthramide B biosynthesis.</text>
</comment>
<comment type="induction">
    <text evidence="3">By fungal elicitors. Elicitation triggers a rapid, transient induction, reaching maximal abundances within about 0.5 hours and returning to basal levels within 4 hours.</text>
</comment>
<comment type="PTM">
    <text evidence="4">N-terminus is blocked.</text>
</comment>
<comment type="similarity">
    <text evidence="4">Belongs to the plant acyltransferase family.</text>
</comment>
<dbReference type="EC" id="2.3.1.144"/>
<dbReference type="EMBL" id="Z84383">
    <property type="protein sequence ID" value="CAB06427.1"/>
    <property type="molecule type" value="mRNA"/>
</dbReference>
<dbReference type="EMBL" id="Z84385">
    <property type="protein sequence ID" value="CAB06429.1"/>
    <property type="molecule type" value="mRNA"/>
</dbReference>
<dbReference type="PIR" id="T10717">
    <property type="entry name" value="T10717"/>
</dbReference>
<dbReference type="SMR" id="O24645"/>
<dbReference type="KEGG" id="ag:CAB06427"/>
<dbReference type="BioCyc" id="MetaCyc:MONOMER-15060"/>
<dbReference type="BRENDA" id="2.3.1.144">
    <property type="organism ID" value="1925"/>
</dbReference>
<dbReference type="UniPathway" id="UPA00900"/>
<dbReference type="GO" id="GO:0047672">
    <property type="term" value="F:anthranilate N-benzoyltransferase activity"/>
    <property type="evidence" value="ECO:0007669"/>
    <property type="project" value="UniProtKB-EC"/>
</dbReference>
<dbReference type="GO" id="GO:0009813">
    <property type="term" value="P:flavonoid biosynthetic process"/>
    <property type="evidence" value="ECO:0007669"/>
    <property type="project" value="UniProtKB-KW"/>
</dbReference>
<dbReference type="FunFam" id="3.30.559.10:FF:000008">
    <property type="entry name" value="Tryptamine hydroxycinnamoyl transferase"/>
    <property type="match status" value="1"/>
</dbReference>
<dbReference type="Gene3D" id="3.30.559.10">
    <property type="entry name" value="Chloramphenicol acetyltransferase-like domain"/>
    <property type="match status" value="2"/>
</dbReference>
<dbReference type="InterPro" id="IPR023213">
    <property type="entry name" value="CAT-like_dom_sf"/>
</dbReference>
<dbReference type="InterPro" id="IPR050317">
    <property type="entry name" value="Plant_Fungal_Acyltransferase"/>
</dbReference>
<dbReference type="PANTHER" id="PTHR31642:SF11">
    <property type="entry name" value="SHIKIMATE O-HYDROXYCINNAMOYLTRANSFERASE"/>
    <property type="match status" value="1"/>
</dbReference>
<dbReference type="PANTHER" id="PTHR31642">
    <property type="entry name" value="TRICHOTHECENE 3-O-ACETYLTRANSFERASE"/>
    <property type="match status" value="1"/>
</dbReference>
<dbReference type="Pfam" id="PF02458">
    <property type="entry name" value="Transferase"/>
    <property type="match status" value="1"/>
</dbReference>
<accession>O24645</accession>
<name>HCBT1_DIACA</name>